<comment type="function">
    <text evidence="1">Associates with the EF-Tu.GDP complex and induces the exchange of GDP to GTP. It remains bound to the aminoacyl-tRNA.EF-Tu.GTP complex up to the GTP hydrolysis stage on the ribosome.</text>
</comment>
<comment type="subcellular location">
    <subcellularLocation>
        <location evidence="1">Mitochondrion</location>
    </subcellularLocation>
</comment>
<comment type="similarity">
    <text evidence="1">Belongs to the EF-Ts family.</text>
</comment>
<comment type="sequence caution" evidence="2">
    <conflict type="erroneous gene model prediction">
        <sequence resource="EMBL-CDS" id="EAZ42651"/>
    </conflict>
</comment>
<comment type="sequence caution" evidence="2">
    <conflict type="erroneous gene model prediction">
        <sequence resource="EMBL-CDS" id="EEE68643"/>
    </conflict>
</comment>
<reference key="1">
    <citation type="journal article" date="2005" name="Nature">
        <title>The map-based sequence of the rice genome.</title>
        <authorList>
            <consortium name="International rice genome sequencing project (IRGSP)"/>
        </authorList>
    </citation>
    <scope>NUCLEOTIDE SEQUENCE [LARGE SCALE GENOMIC DNA]</scope>
    <source>
        <strain>cv. Nipponbare</strain>
    </source>
</reference>
<reference key="2">
    <citation type="journal article" date="2008" name="Nucleic Acids Res.">
        <title>The rice annotation project database (RAP-DB): 2008 update.</title>
        <authorList>
            <consortium name="The rice annotation project (RAP)"/>
        </authorList>
    </citation>
    <scope>GENOME REANNOTATION</scope>
    <source>
        <strain>cv. Nipponbare</strain>
    </source>
</reference>
<reference key="3">
    <citation type="journal article" date="2013" name="Rice">
        <title>Improvement of the Oryza sativa Nipponbare reference genome using next generation sequence and optical map data.</title>
        <authorList>
            <person name="Kawahara Y."/>
            <person name="de la Bastide M."/>
            <person name="Hamilton J.P."/>
            <person name="Kanamori H."/>
            <person name="McCombie W.R."/>
            <person name="Ouyang S."/>
            <person name="Schwartz D.C."/>
            <person name="Tanaka T."/>
            <person name="Wu J."/>
            <person name="Zhou S."/>
            <person name="Childs K.L."/>
            <person name="Davidson R.M."/>
            <person name="Lin H."/>
            <person name="Quesada-Ocampo L."/>
            <person name="Vaillancourt B."/>
            <person name="Sakai H."/>
            <person name="Lee S.S."/>
            <person name="Kim J."/>
            <person name="Numa H."/>
            <person name="Itoh T."/>
            <person name="Buell C.R."/>
            <person name="Matsumoto T."/>
        </authorList>
    </citation>
    <scope>GENOME REANNOTATION</scope>
    <source>
        <strain>cv. Nipponbare</strain>
    </source>
</reference>
<reference key="4">
    <citation type="journal article" date="2005" name="PLoS Biol.">
        <title>The genomes of Oryza sativa: a history of duplications.</title>
        <authorList>
            <person name="Yu J."/>
            <person name="Wang J."/>
            <person name="Lin W."/>
            <person name="Li S."/>
            <person name="Li H."/>
            <person name="Zhou J."/>
            <person name="Ni P."/>
            <person name="Dong W."/>
            <person name="Hu S."/>
            <person name="Zeng C."/>
            <person name="Zhang J."/>
            <person name="Zhang Y."/>
            <person name="Li R."/>
            <person name="Xu Z."/>
            <person name="Li S."/>
            <person name="Li X."/>
            <person name="Zheng H."/>
            <person name="Cong L."/>
            <person name="Lin L."/>
            <person name="Yin J."/>
            <person name="Geng J."/>
            <person name="Li G."/>
            <person name="Shi J."/>
            <person name="Liu J."/>
            <person name="Lv H."/>
            <person name="Li J."/>
            <person name="Wang J."/>
            <person name="Deng Y."/>
            <person name="Ran L."/>
            <person name="Shi X."/>
            <person name="Wang X."/>
            <person name="Wu Q."/>
            <person name="Li C."/>
            <person name="Ren X."/>
            <person name="Wang J."/>
            <person name="Wang X."/>
            <person name="Li D."/>
            <person name="Liu D."/>
            <person name="Zhang X."/>
            <person name="Ji Z."/>
            <person name="Zhao W."/>
            <person name="Sun Y."/>
            <person name="Zhang Z."/>
            <person name="Bao J."/>
            <person name="Han Y."/>
            <person name="Dong L."/>
            <person name="Ji J."/>
            <person name="Chen P."/>
            <person name="Wu S."/>
            <person name="Liu J."/>
            <person name="Xiao Y."/>
            <person name="Bu D."/>
            <person name="Tan J."/>
            <person name="Yang L."/>
            <person name="Ye C."/>
            <person name="Zhang J."/>
            <person name="Xu J."/>
            <person name="Zhou Y."/>
            <person name="Yu Y."/>
            <person name="Zhang B."/>
            <person name="Zhuang S."/>
            <person name="Wei H."/>
            <person name="Liu B."/>
            <person name="Lei M."/>
            <person name="Yu H."/>
            <person name="Li Y."/>
            <person name="Xu H."/>
            <person name="Wei S."/>
            <person name="He X."/>
            <person name="Fang L."/>
            <person name="Zhang Z."/>
            <person name="Zhang Y."/>
            <person name="Huang X."/>
            <person name="Su Z."/>
            <person name="Tong W."/>
            <person name="Li J."/>
            <person name="Tong Z."/>
            <person name="Li S."/>
            <person name="Ye J."/>
            <person name="Wang L."/>
            <person name="Fang L."/>
            <person name="Lei T."/>
            <person name="Chen C.-S."/>
            <person name="Chen H.-C."/>
            <person name="Xu Z."/>
            <person name="Li H."/>
            <person name="Huang H."/>
            <person name="Zhang F."/>
            <person name="Xu H."/>
            <person name="Li N."/>
            <person name="Zhao C."/>
            <person name="Li S."/>
            <person name="Dong L."/>
            <person name="Huang Y."/>
            <person name="Li L."/>
            <person name="Xi Y."/>
            <person name="Qi Q."/>
            <person name="Li W."/>
            <person name="Zhang B."/>
            <person name="Hu W."/>
            <person name="Zhang Y."/>
            <person name="Tian X."/>
            <person name="Jiao Y."/>
            <person name="Liang X."/>
            <person name="Jin J."/>
            <person name="Gao L."/>
            <person name="Zheng W."/>
            <person name="Hao B."/>
            <person name="Liu S.-M."/>
            <person name="Wang W."/>
            <person name="Yuan L."/>
            <person name="Cao M."/>
            <person name="McDermott J."/>
            <person name="Samudrala R."/>
            <person name="Wang J."/>
            <person name="Wong G.K.-S."/>
            <person name="Yang H."/>
        </authorList>
    </citation>
    <scope>NUCLEOTIDE SEQUENCE [LARGE SCALE GENOMIC DNA]</scope>
    <source>
        <strain>cv. Nipponbare</strain>
    </source>
</reference>
<reference key="5">
    <citation type="journal article" date="2003" name="Science">
        <title>Collection, mapping, and annotation of over 28,000 cDNA clones from japonica rice.</title>
        <authorList>
            <consortium name="The rice full-length cDNA consortium"/>
        </authorList>
    </citation>
    <scope>NUCLEOTIDE SEQUENCE [LARGE SCALE MRNA]</scope>
    <source>
        <strain>cv. Nipponbare</strain>
    </source>
</reference>
<sequence length="366" mass="40014">MAWSQSARKPMIGLLFRAQQHSARGYSYSAFQAHLSSSNVDQSATLLRRFSSEVPASEQMNLIKQLRERTSAPIKDVKASLVSCNWDIDVAQKDLRKRGVVLAAKKSSRTAAEGLLAIAQDEKRAAVVELNCETDFVARNDVFQYLASSLAKLALSARDPGELVFPFGPDYLENLNVNLDHPKLSGETTVQSAVTEVAAMVGENVKFRRGFIMSTTAHGVVCSYMHTCPQPGLGRLAGLITLEAEDSNAPLDALQRVGKSIAMHIVATKPLFLSKELVSASAVENERDILRTQAESSGKSQMAMEKMVEGRLRKYFEEVVLLEQKYVVNDSTNIKSVLNDLSKEVGSKVTVGNFARMEVGEGVSKA</sequence>
<protein>
    <recommendedName>
        <fullName evidence="1">Elongation factor Ts, mitochondrial</fullName>
        <shortName evidence="1">EF-Ts</shortName>
        <shortName evidence="1">EF-TsMt</shortName>
    </recommendedName>
</protein>
<proteinExistence type="evidence at transcript level"/>
<feature type="transit peptide" description="Mitochondrion" evidence="1">
    <location>
        <begin position="1"/>
        <end position="50"/>
    </location>
</feature>
<feature type="chain" id="PRO_0000402327" description="Elongation factor Ts, mitochondrial">
    <location>
        <begin position="51"/>
        <end position="366"/>
    </location>
</feature>
<evidence type="ECO:0000255" key="1">
    <source>
        <dbReference type="HAMAP-Rule" id="MF_03135"/>
    </source>
</evidence>
<evidence type="ECO:0000305" key="2"/>
<dbReference type="EMBL" id="AP003904">
    <property type="protein sequence ID" value="BAC99379.1"/>
    <property type="molecule type" value="Genomic_DNA"/>
</dbReference>
<dbReference type="EMBL" id="AP008214">
    <property type="protein sequence ID" value="BAF23663.1"/>
    <property type="molecule type" value="Genomic_DNA"/>
</dbReference>
<dbReference type="EMBL" id="AP014964">
    <property type="status" value="NOT_ANNOTATED_CDS"/>
    <property type="molecule type" value="Genomic_DNA"/>
</dbReference>
<dbReference type="EMBL" id="CM000145">
    <property type="protein sequence ID" value="EAZ42651.1"/>
    <property type="status" value="ALT_SEQ"/>
    <property type="molecule type" value="Genomic_DNA"/>
</dbReference>
<dbReference type="EMBL" id="CM000145">
    <property type="protein sequence ID" value="EEE68643.1"/>
    <property type="status" value="ALT_SEQ"/>
    <property type="molecule type" value="Genomic_DNA"/>
</dbReference>
<dbReference type="EMBL" id="AK071873">
    <property type="protein sequence ID" value="BAG92740.1"/>
    <property type="molecule type" value="mRNA"/>
</dbReference>
<dbReference type="RefSeq" id="XP_015648512.1">
    <property type="nucleotide sequence ID" value="XM_015793026.1"/>
</dbReference>
<dbReference type="SMR" id="Q6ZJS7"/>
<dbReference type="FunCoup" id="Q6ZJS7">
    <property type="interactions" value="2813"/>
</dbReference>
<dbReference type="STRING" id="39947.Q6ZJS7"/>
<dbReference type="PaxDb" id="39947-Q6ZJS7"/>
<dbReference type="KEGG" id="dosa:Os08g0399600"/>
<dbReference type="eggNOG" id="KOG1071">
    <property type="taxonomic scope" value="Eukaryota"/>
</dbReference>
<dbReference type="HOGENOM" id="CLU_047155_2_1_1"/>
<dbReference type="InParanoid" id="Q6ZJS7"/>
<dbReference type="OrthoDB" id="277235at2759"/>
<dbReference type="Proteomes" id="UP000000763">
    <property type="component" value="Chromosome 8"/>
</dbReference>
<dbReference type="Proteomes" id="UP000007752">
    <property type="component" value="Chromosome 8"/>
</dbReference>
<dbReference type="Proteomes" id="UP000059680">
    <property type="component" value="Chromosome 8"/>
</dbReference>
<dbReference type="GO" id="GO:0005739">
    <property type="term" value="C:mitochondrion"/>
    <property type="evidence" value="ECO:0007669"/>
    <property type="project" value="UniProtKB-SubCell"/>
</dbReference>
<dbReference type="GO" id="GO:0003746">
    <property type="term" value="F:translation elongation factor activity"/>
    <property type="evidence" value="ECO:0000318"/>
    <property type="project" value="GO_Central"/>
</dbReference>
<dbReference type="GO" id="GO:0070125">
    <property type="term" value="P:mitochondrial translational elongation"/>
    <property type="evidence" value="ECO:0000318"/>
    <property type="project" value="GO_Central"/>
</dbReference>
<dbReference type="CDD" id="cd14275">
    <property type="entry name" value="UBA_EF-Ts"/>
    <property type="match status" value="1"/>
</dbReference>
<dbReference type="FunFam" id="1.10.286.20:FF:000001">
    <property type="entry name" value="Elongation factor Ts"/>
    <property type="match status" value="1"/>
</dbReference>
<dbReference type="FunFam" id="1.10.8.10:FF:000001">
    <property type="entry name" value="Elongation factor Ts"/>
    <property type="match status" value="1"/>
</dbReference>
<dbReference type="FunFam" id="3.30.479.20:FF:000012">
    <property type="entry name" value="Elongation factor Ts, mitochondrial"/>
    <property type="match status" value="1"/>
</dbReference>
<dbReference type="Gene3D" id="1.10.286.20">
    <property type="match status" value="1"/>
</dbReference>
<dbReference type="Gene3D" id="1.10.8.10">
    <property type="entry name" value="DNA helicase RuvA subunit, C-terminal domain"/>
    <property type="match status" value="1"/>
</dbReference>
<dbReference type="Gene3D" id="3.30.479.20">
    <property type="entry name" value="Elongation factor Ts, dimerisation domain"/>
    <property type="match status" value="2"/>
</dbReference>
<dbReference type="HAMAP" id="MF_00050">
    <property type="entry name" value="EF_Ts"/>
    <property type="match status" value="1"/>
</dbReference>
<dbReference type="InterPro" id="IPR036402">
    <property type="entry name" value="EF-Ts_dimer_sf"/>
</dbReference>
<dbReference type="InterPro" id="IPR001816">
    <property type="entry name" value="Transl_elong_EFTs/EF1B"/>
</dbReference>
<dbReference type="InterPro" id="IPR014039">
    <property type="entry name" value="Transl_elong_EFTs/EF1B_dimer"/>
</dbReference>
<dbReference type="InterPro" id="IPR018101">
    <property type="entry name" value="Transl_elong_Ts_CS"/>
</dbReference>
<dbReference type="InterPro" id="IPR009060">
    <property type="entry name" value="UBA-like_sf"/>
</dbReference>
<dbReference type="NCBIfam" id="TIGR00116">
    <property type="entry name" value="tsf"/>
    <property type="match status" value="1"/>
</dbReference>
<dbReference type="PANTHER" id="PTHR11741">
    <property type="entry name" value="ELONGATION FACTOR TS"/>
    <property type="match status" value="1"/>
</dbReference>
<dbReference type="PANTHER" id="PTHR11741:SF0">
    <property type="entry name" value="ELONGATION FACTOR TS, MITOCHONDRIAL"/>
    <property type="match status" value="1"/>
</dbReference>
<dbReference type="Pfam" id="PF00889">
    <property type="entry name" value="EF_TS"/>
    <property type="match status" value="1"/>
</dbReference>
<dbReference type="SUPFAM" id="SSF54713">
    <property type="entry name" value="Elongation factor Ts (EF-Ts), dimerisation domain"/>
    <property type="match status" value="2"/>
</dbReference>
<dbReference type="SUPFAM" id="SSF46934">
    <property type="entry name" value="UBA-like"/>
    <property type="match status" value="1"/>
</dbReference>
<dbReference type="PROSITE" id="PS01127">
    <property type="entry name" value="EF_TS_2"/>
    <property type="match status" value="1"/>
</dbReference>
<accession>Q6ZJS7</accession>
<accession>A3BSW2</accession>
<accession>B9G0S6</accession>
<organism>
    <name type="scientific">Oryza sativa subsp. japonica</name>
    <name type="common">Rice</name>
    <dbReference type="NCBI Taxonomy" id="39947"/>
    <lineage>
        <taxon>Eukaryota</taxon>
        <taxon>Viridiplantae</taxon>
        <taxon>Streptophyta</taxon>
        <taxon>Embryophyta</taxon>
        <taxon>Tracheophyta</taxon>
        <taxon>Spermatophyta</taxon>
        <taxon>Magnoliopsida</taxon>
        <taxon>Liliopsida</taxon>
        <taxon>Poales</taxon>
        <taxon>Poaceae</taxon>
        <taxon>BOP clade</taxon>
        <taxon>Oryzoideae</taxon>
        <taxon>Oryzeae</taxon>
        <taxon>Oryzinae</taxon>
        <taxon>Oryza</taxon>
        <taxon>Oryza sativa</taxon>
    </lineage>
</organism>
<name>EFTS_ORYSJ</name>
<gene>
    <name evidence="1" type="primary">EFTS</name>
    <name type="ordered locus">Os08g0399600</name>
    <name type="ORF">OJ1051_A08.16</name>
    <name type="ORF">OsJ_27216/OsJ_27215</name>
</gene>
<keyword id="KW-0251">Elongation factor</keyword>
<keyword id="KW-0496">Mitochondrion</keyword>
<keyword id="KW-0648">Protein biosynthesis</keyword>
<keyword id="KW-1185">Reference proteome</keyword>
<keyword id="KW-0809">Transit peptide</keyword>